<accession>A4RF51</accession>
<accession>G4NC15</accession>
<sequence length="1150" mass="128528">MDADWGEIAQYHTQLGYRPDPTNPSAHHSAPTAVAFDTRSELLWVGKDQGRVAAYVYFLNNGIMEFQRHIAFLSHPRQQGPVHQFLFNETGVISLGSHNVHMAQRGGMCLANIGHVNMTNLRCMTFTSRGTSEILVAGDQDTMFVIDLNKKQITKEVPAPNHYFLMKKSKYICAASRNGCVDILDPITLKVINTWNTRSAQLNDMDVQHDFIVTCGASLKQGTYMADPYVNVFDLKNMRSFPPISFPPLVTYARMHPKMVTTSIVVSKTGQMHVVDIANPHNPIVRQVLGHTHLALFDVSPSGQAMVFTDTEGYIHVWGPTSKAVSFVDQGLPVEFETEQPNFASIPWSEDFPVNMVGLPHYSDALLSAWPADLSSDVGAPPAQFDQAYVDAMMPNGNVGLYGKAVAGTRRNQVVDTRSADKPQSSLQAPKFLSEKARDGFKGLTMDTSDIETSEDIVPSPIRTDIESLKSVVPNMYHLFEIKFSKFGVDDFDFGYYNKTHHSGLENHITNSYANSLLQLLRFTPILRNLALQHAATSCLDQHCLLCELGYLCDSMEKARGASCQATNMLKMLSQHPAAANLHLLDGDRIASSSAMKIQGLLRFLLDFMSRDYGKTSPGINDLENATATSSQSLIRCDQCKSETSRPQTNYVQDLAYSPVTSNGNKGVDVADSYLAAQQGVARGRMAPAKLPSFSQILKKSIEREQVTRGWCTTCRGYQPLSMRKIIKSIPQVLAANTCISSVEEKKLWATPGWLPEEVGFIIDKEHIFCYEGAELDWLIKNGKYKLYVYSLMGLVVNIEPGPTFKPHPVAIINAAHSEPQKPAKSQWHLFNDFHVKPISAREALTFNTSWKTPLVVMFQLKAANNHIDSTWLQRLDTSILYQDQSPEAEDKSYTLLDRNKEAPTPGTVIAIDAEFVLAKDFEYAVNSDGEKETIRPRIHSLGRVSVVRASGDRRGVPFIDDYINIKEPIVNYFTEFSGLTETDLDPKTSRHNLVPLKLAFKKLWLLLNLGCIFVGHGLRSDFRVINLQVPREQVHDTQELFWVEAQRRKLSLAFLAKSVLNLEIQGHMHDSIEDANTAQLLYWKYKELLESGRLHEELKKIYAFGVKHGFRPVKVAGQSAQRTETPPMVDDAQPGALLPYQPPELLQGS</sequence>
<reference key="1">
    <citation type="journal article" date="2005" name="Nature">
        <title>The genome sequence of the rice blast fungus Magnaporthe grisea.</title>
        <authorList>
            <person name="Dean R.A."/>
            <person name="Talbot N.J."/>
            <person name="Ebbole D.J."/>
            <person name="Farman M.L."/>
            <person name="Mitchell T.K."/>
            <person name="Orbach M.J."/>
            <person name="Thon M.R."/>
            <person name="Kulkarni R."/>
            <person name="Xu J.-R."/>
            <person name="Pan H."/>
            <person name="Read N.D."/>
            <person name="Lee Y.-H."/>
            <person name="Carbone I."/>
            <person name="Brown D."/>
            <person name="Oh Y.Y."/>
            <person name="Donofrio N."/>
            <person name="Jeong J.S."/>
            <person name="Soanes D.M."/>
            <person name="Djonovic S."/>
            <person name="Kolomiets E."/>
            <person name="Rehmeyer C."/>
            <person name="Li W."/>
            <person name="Harding M."/>
            <person name="Kim S."/>
            <person name="Lebrun M.-H."/>
            <person name="Bohnert H."/>
            <person name="Coughlan S."/>
            <person name="Butler J."/>
            <person name="Calvo S.E."/>
            <person name="Ma L.-J."/>
            <person name="Nicol R."/>
            <person name="Purcell S."/>
            <person name="Nusbaum C."/>
            <person name="Galagan J.E."/>
            <person name="Birren B.W."/>
        </authorList>
    </citation>
    <scope>NUCLEOTIDE SEQUENCE [LARGE SCALE GENOMIC DNA]</scope>
    <source>
        <strain>70-15 / ATCC MYA-4617 / FGSC 8958</strain>
    </source>
</reference>
<comment type="function">
    <text evidence="1">Catalytic subunit of the poly(A)-nuclease (PAN) deadenylation complex, one of two cytoplasmic mRNA deadenylases involved in mRNA turnover. PAN specifically shortens poly(A) tails of RNA and the activity is stimulated by poly(A)-binding protein PAB1. PAN deadenylation is followed by rapid degradation of the shortened mRNA tails by the CCR4-NOT complex. Deadenylated mRNAs are then degraded by two alternative mechanisms, namely exosome-mediated 3'-5' exonucleolytic degradation, or deadenylation-dependent mRNA decaping and subsequent 5'-3' exonucleolytic degradation by XRN1. May also be involved in post-transcriptional maturation of mRNA poly(A) tails.</text>
</comment>
<comment type="catalytic activity">
    <reaction evidence="1">
        <text>Exonucleolytic cleavage of poly(A) to 5'-AMP.</text>
        <dbReference type="EC" id="3.1.13.4"/>
    </reaction>
</comment>
<comment type="cofactor">
    <cofactor evidence="1">
        <name>a divalent metal cation</name>
        <dbReference type="ChEBI" id="CHEBI:60240"/>
    </cofactor>
    <text evidence="1">Binds 2 metal cations per subunit in the catalytic exonuclease domain.</text>
</comment>
<comment type="activity regulation">
    <text evidence="1">Positively regulated by the regulatory subunit PAN3.</text>
</comment>
<comment type="subunit">
    <text evidence="1">Forms a heterotrimer with an asymmetric homodimer of the regulatory subunit PAN3 to form the poly(A)-nuclease (PAN) deadenylation complex.</text>
</comment>
<comment type="subcellular location">
    <subcellularLocation>
        <location evidence="1">Cytoplasm</location>
    </subcellularLocation>
</comment>
<comment type="domain">
    <text evidence="1">Contains a pseudo-UCH domain. This ubiquitin C-terminal hydrolase (UCH)-like or ubiquitin specific protease (USP)-like domain is predicted to be catalytically inactive because it lacks the active site catalytic triad characteristic of thiol proteases, with residues at the equivalent structural positions that are incompatible with catalysis, and it cannot bind ubiquitin. It functions as a structural scaffold for intra- and intermolecular interactions in the complex.</text>
</comment>
<comment type="domain">
    <text evidence="1">The linker, or PAN3 interaction domain (PID), between the WD40 repeats and the pseudo-UCH domain mediates interaction with PAN3.</text>
</comment>
<comment type="similarity">
    <text evidence="1">Belongs to the peptidase C19 family. PAN2 subfamily.</text>
</comment>
<name>PAN2_PYRO7</name>
<evidence type="ECO:0000255" key="1">
    <source>
        <dbReference type="HAMAP-Rule" id="MF_03182"/>
    </source>
</evidence>
<evidence type="ECO:0000256" key="2">
    <source>
        <dbReference type="SAM" id="MobiDB-lite"/>
    </source>
</evidence>
<organism>
    <name type="scientific">Pyricularia oryzae (strain 70-15 / ATCC MYA-4617 / FGSC 8958)</name>
    <name type="common">Rice blast fungus</name>
    <name type="synonym">Magnaporthe oryzae</name>
    <dbReference type="NCBI Taxonomy" id="242507"/>
    <lineage>
        <taxon>Eukaryota</taxon>
        <taxon>Fungi</taxon>
        <taxon>Dikarya</taxon>
        <taxon>Ascomycota</taxon>
        <taxon>Pezizomycotina</taxon>
        <taxon>Sordariomycetes</taxon>
        <taxon>Sordariomycetidae</taxon>
        <taxon>Magnaporthales</taxon>
        <taxon>Pyriculariaceae</taxon>
        <taxon>Pyricularia</taxon>
    </lineage>
</organism>
<proteinExistence type="inferred from homology"/>
<gene>
    <name evidence="1" type="primary">PAN2</name>
    <name type="ORF">MGG_17449</name>
</gene>
<keyword id="KW-0963">Cytoplasm</keyword>
<keyword id="KW-0269">Exonuclease</keyword>
<keyword id="KW-0378">Hydrolase</keyword>
<keyword id="KW-0479">Metal-binding</keyword>
<keyword id="KW-0507">mRNA processing</keyword>
<keyword id="KW-0540">Nuclease</keyword>
<keyword id="KW-1185">Reference proteome</keyword>
<keyword id="KW-0677">Repeat</keyword>
<keyword id="KW-0853">WD repeat</keyword>
<protein>
    <recommendedName>
        <fullName evidence="1">PAN2-PAN3 deadenylation complex catalytic subunit PAN2</fullName>
        <ecNumber evidence="1">3.1.13.4</ecNumber>
    </recommendedName>
    <alternativeName>
        <fullName evidence="1">PAB1P-dependent poly(A)-specific ribonuclease</fullName>
    </alternativeName>
    <alternativeName>
        <fullName evidence="1">Poly(A)-nuclease deadenylation complex subunit 2</fullName>
        <shortName evidence="1">PAN deadenylation complex subunit 2</shortName>
    </alternativeName>
</protein>
<feature type="chain" id="PRO_0000295349" description="PAN2-PAN3 deadenylation complex catalytic subunit PAN2">
    <location>
        <begin position="1"/>
        <end position="1150"/>
    </location>
</feature>
<feature type="repeat" description="WD 1" evidence="1">
    <location>
        <begin position="26"/>
        <end position="67"/>
    </location>
</feature>
<feature type="repeat" description="WD 2" evidence="1">
    <location>
        <begin position="114"/>
        <end position="156"/>
    </location>
</feature>
<feature type="repeat" description="WD 3" evidence="1">
    <location>
        <begin position="158"/>
        <end position="194"/>
    </location>
</feature>
<feature type="repeat" description="WD 4" evidence="1">
    <location>
        <begin position="290"/>
        <end position="328"/>
    </location>
</feature>
<feature type="domain" description="USP" evidence="1">
    <location>
        <begin position="472"/>
        <end position="862"/>
    </location>
</feature>
<feature type="domain" description="Exonuclease" evidence="1">
    <location>
        <begin position="911"/>
        <end position="1079"/>
    </location>
</feature>
<feature type="region of interest" description="Linker" evidence="1">
    <location>
        <begin position="326"/>
        <end position="471"/>
    </location>
</feature>
<feature type="region of interest" description="Disordered" evidence="2">
    <location>
        <begin position="1118"/>
        <end position="1150"/>
    </location>
</feature>
<feature type="binding site" evidence="1">
    <location>
        <position position="913"/>
    </location>
    <ligand>
        <name>a divalent metal cation</name>
        <dbReference type="ChEBI" id="CHEBI:60240"/>
        <note>catalytic</note>
    </ligand>
</feature>
<feature type="binding site" evidence="1">
    <location>
        <position position="915"/>
    </location>
    <ligand>
        <name>a divalent metal cation</name>
        <dbReference type="ChEBI" id="CHEBI:60240"/>
        <note>catalytic</note>
    </ligand>
</feature>
<feature type="binding site" evidence="1">
    <location>
        <position position="1022"/>
    </location>
    <ligand>
        <name>a divalent metal cation</name>
        <dbReference type="ChEBI" id="CHEBI:60240"/>
        <note>catalytic</note>
    </ligand>
</feature>
<feature type="binding site" evidence="1">
    <location>
        <position position="1075"/>
    </location>
    <ligand>
        <name>a divalent metal cation</name>
        <dbReference type="ChEBI" id="CHEBI:60240"/>
        <note>catalytic</note>
    </ligand>
</feature>
<dbReference type="EC" id="3.1.13.4" evidence="1"/>
<dbReference type="EMBL" id="CM001235">
    <property type="protein sequence ID" value="EHA49018.1"/>
    <property type="molecule type" value="Genomic_DNA"/>
</dbReference>
<dbReference type="RefSeq" id="XP_003718602.1">
    <property type="nucleotide sequence ID" value="XM_003718554.1"/>
</dbReference>
<dbReference type="SMR" id="A4RF51"/>
<dbReference type="FunCoup" id="A4RF51">
    <property type="interactions" value="680"/>
</dbReference>
<dbReference type="STRING" id="242507.A4RF51"/>
<dbReference type="EnsemblFungi" id="MGG_17449T0">
    <property type="protein sequence ID" value="MGG_17449T0"/>
    <property type="gene ID" value="MGG_17449"/>
</dbReference>
<dbReference type="GeneID" id="12984125"/>
<dbReference type="KEGG" id="mgr:MGG_17449"/>
<dbReference type="VEuPathDB" id="FungiDB:MGG_17449"/>
<dbReference type="eggNOG" id="KOG1275">
    <property type="taxonomic scope" value="Eukaryota"/>
</dbReference>
<dbReference type="HOGENOM" id="CLU_002369_1_0_1"/>
<dbReference type="InParanoid" id="A4RF51"/>
<dbReference type="OMA" id="TQELLWT"/>
<dbReference type="OrthoDB" id="16516at2759"/>
<dbReference type="Proteomes" id="UP000009058">
    <property type="component" value="Chromosome 5"/>
</dbReference>
<dbReference type="GO" id="GO:0000932">
    <property type="term" value="C:P-body"/>
    <property type="evidence" value="ECO:0007669"/>
    <property type="project" value="TreeGrafter"/>
</dbReference>
<dbReference type="GO" id="GO:0031251">
    <property type="term" value="C:PAN complex"/>
    <property type="evidence" value="ECO:0007669"/>
    <property type="project" value="UniProtKB-UniRule"/>
</dbReference>
<dbReference type="GO" id="GO:0046872">
    <property type="term" value="F:metal ion binding"/>
    <property type="evidence" value="ECO:0007669"/>
    <property type="project" value="UniProtKB-KW"/>
</dbReference>
<dbReference type="GO" id="GO:0003676">
    <property type="term" value="F:nucleic acid binding"/>
    <property type="evidence" value="ECO:0007669"/>
    <property type="project" value="InterPro"/>
</dbReference>
<dbReference type="GO" id="GO:0004535">
    <property type="term" value="F:poly(A)-specific ribonuclease activity"/>
    <property type="evidence" value="ECO:0007669"/>
    <property type="project" value="UniProtKB-UniRule"/>
</dbReference>
<dbReference type="GO" id="GO:0006397">
    <property type="term" value="P:mRNA processing"/>
    <property type="evidence" value="ECO:0007669"/>
    <property type="project" value="UniProtKB-KW"/>
</dbReference>
<dbReference type="GO" id="GO:0000289">
    <property type="term" value="P:nuclear-transcribed mRNA poly(A) tail shortening"/>
    <property type="evidence" value="ECO:0007669"/>
    <property type="project" value="UniProtKB-UniRule"/>
</dbReference>
<dbReference type="CDD" id="cd06143">
    <property type="entry name" value="PAN2_exo"/>
    <property type="match status" value="1"/>
</dbReference>
<dbReference type="FunFam" id="2.130.10.10:FF:000459">
    <property type="entry name" value="PAN2-PAN3 deadenylation complex catalytic subunit PAN2"/>
    <property type="match status" value="1"/>
</dbReference>
<dbReference type="FunFam" id="3.30.420.10:FF:000028">
    <property type="entry name" value="PAN2-PAN3 deadenylation complex catalytic subunit PAN2"/>
    <property type="match status" value="1"/>
</dbReference>
<dbReference type="Gene3D" id="3.90.70.10">
    <property type="entry name" value="Cysteine proteinases"/>
    <property type="match status" value="1"/>
</dbReference>
<dbReference type="Gene3D" id="3.30.420.10">
    <property type="entry name" value="Ribonuclease H-like superfamily/Ribonuclease H"/>
    <property type="match status" value="1"/>
</dbReference>
<dbReference type="Gene3D" id="2.130.10.10">
    <property type="entry name" value="YVTN repeat-like/Quinoprotein amine dehydrogenase"/>
    <property type="match status" value="1"/>
</dbReference>
<dbReference type="HAMAP" id="MF_03182">
    <property type="entry name" value="PAN2"/>
    <property type="match status" value="1"/>
</dbReference>
<dbReference type="InterPro" id="IPR013520">
    <property type="entry name" value="Exonuclease_RNaseT/DNA_pol3"/>
</dbReference>
<dbReference type="InterPro" id="IPR030843">
    <property type="entry name" value="PAN2"/>
</dbReference>
<dbReference type="InterPro" id="IPR050785">
    <property type="entry name" value="PAN2-PAN3_catalytic_subunit"/>
</dbReference>
<dbReference type="InterPro" id="IPR048841">
    <property type="entry name" value="PAN2_N"/>
</dbReference>
<dbReference type="InterPro" id="IPR028881">
    <property type="entry name" value="PAN2_UCH_dom"/>
</dbReference>
<dbReference type="InterPro" id="IPR038765">
    <property type="entry name" value="Papain-like_cys_pep_sf"/>
</dbReference>
<dbReference type="InterPro" id="IPR012337">
    <property type="entry name" value="RNaseH-like_sf"/>
</dbReference>
<dbReference type="InterPro" id="IPR036397">
    <property type="entry name" value="RNaseH_sf"/>
</dbReference>
<dbReference type="InterPro" id="IPR028889">
    <property type="entry name" value="USP_dom"/>
</dbReference>
<dbReference type="InterPro" id="IPR015943">
    <property type="entry name" value="WD40/YVTN_repeat-like_dom_sf"/>
</dbReference>
<dbReference type="PANTHER" id="PTHR15728">
    <property type="entry name" value="DEADENYLATION COMPLEX CATALYTIC SUBUNIT PAN2"/>
    <property type="match status" value="1"/>
</dbReference>
<dbReference type="PANTHER" id="PTHR15728:SF0">
    <property type="entry name" value="PAN2-PAN3 DEADENYLATION COMPLEX CATALYTIC SUBUNIT PAN2"/>
    <property type="match status" value="1"/>
</dbReference>
<dbReference type="Pfam" id="PF20770">
    <property type="entry name" value="PAN2_N"/>
    <property type="match status" value="1"/>
</dbReference>
<dbReference type="Pfam" id="PF00929">
    <property type="entry name" value="RNase_T"/>
    <property type="match status" value="1"/>
</dbReference>
<dbReference type="Pfam" id="PF13423">
    <property type="entry name" value="UCH_1"/>
    <property type="match status" value="1"/>
</dbReference>
<dbReference type="SMART" id="SM00479">
    <property type="entry name" value="EXOIII"/>
    <property type="match status" value="1"/>
</dbReference>
<dbReference type="SUPFAM" id="SSF54001">
    <property type="entry name" value="Cysteine proteinases"/>
    <property type="match status" value="1"/>
</dbReference>
<dbReference type="SUPFAM" id="SSF101908">
    <property type="entry name" value="Putative isomerase YbhE"/>
    <property type="match status" value="1"/>
</dbReference>
<dbReference type="SUPFAM" id="SSF53098">
    <property type="entry name" value="Ribonuclease H-like"/>
    <property type="match status" value="1"/>
</dbReference>
<dbReference type="PROSITE" id="PS50235">
    <property type="entry name" value="USP_3"/>
    <property type="match status" value="1"/>
</dbReference>